<name>CYB_TRYBO</name>
<evidence type="ECO:0000250" key="1"/>
<evidence type="ECO:0000250" key="2">
    <source>
        <dbReference type="UniProtKB" id="P00157"/>
    </source>
</evidence>
<evidence type="ECO:0000250" key="3">
    <source>
        <dbReference type="UniProtKB" id="P00163"/>
    </source>
</evidence>
<evidence type="ECO:0000255" key="4"/>
<evidence type="ECO:0000255" key="5">
    <source>
        <dbReference type="PROSITE-ProRule" id="PRU00967"/>
    </source>
</evidence>
<evidence type="ECO:0000255" key="6">
    <source>
        <dbReference type="PROSITE-ProRule" id="PRU00968"/>
    </source>
</evidence>
<evidence type="ECO:0000269" key="7">
    <source>
    </source>
</evidence>
<evidence type="ECO:0000269" key="8">
    <source>
    </source>
</evidence>
<dbReference type="EMBL" id="U14182">
    <property type="protein sequence ID" value="AAA65017.1"/>
    <property type="status" value="ALT_SEQ"/>
    <property type="molecule type" value="mRNA"/>
</dbReference>
<dbReference type="EMBL" id="U11684">
    <property type="protein sequence ID" value="AAA73455.1"/>
    <property type="molecule type" value="mRNA"/>
</dbReference>
<dbReference type="PIR" id="S52054">
    <property type="entry name" value="S52054"/>
</dbReference>
<dbReference type="SMR" id="Q33568"/>
<dbReference type="GO" id="GO:0005743">
    <property type="term" value="C:mitochondrial inner membrane"/>
    <property type="evidence" value="ECO:0007669"/>
    <property type="project" value="UniProtKB-SubCell"/>
</dbReference>
<dbReference type="GO" id="GO:0009055">
    <property type="term" value="F:electron transfer activity"/>
    <property type="evidence" value="ECO:0007669"/>
    <property type="project" value="InterPro"/>
</dbReference>
<dbReference type="GO" id="GO:0046872">
    <property type="term" value="F:metal ion binding"/>
    <property type="evidence" value="ECO:0007669"/>
    <property type="project" value="UniProtKB-KW"/>
</dbReference>
<dbReference type="GO" id="GO:0016491">
    <property type="term" value="F:oxidoreductase activity"/>
    <property type="evidence" value="ECO:0007669"/>
    <property type="project" value="InterPro"/>
</dbReference>
<dbReference type="GO" id="GO:0022904">
    <property type="term" value="P:respiratory electron transport chain"/>
    <property type="evidence" value="ECO:0007669"/>
    <property type="project" value="InterPro"/>
</dbReference>
<dbReference type="Gene3D" id="1.20.810.10">
    <property type="entry name" value="Cytochrome Bc1 Complex, Chain C"/>
    <property type="match status" value="1"/>
</dbReference>
<dbReference type="InterPro" id="IPR005798">
    <property type="entry name" value="Cyt_b/b6_C"/>
</dbReference>
<dbReference type="InterPro" id="IPR036150">
    <property type="entry name" value="Cyt_b/b6_C_sf"/>
</dbReference>
<dbReference type="InterPro" id="IPR005797">
    <property type="entry name" value="Cyt_b/b6_N"/>
</dbReference>
<dbReference type="InterPro" id="IPR027387">
    <property type="entry name" value="Cytb/b6-like_sf"/>
</dbReference>
<dbReference type="InterPro" id="IPR016174">
    <property type="entry name" value="Di-haem_cyt_TM"/>
</dbReference>
<dbReference type="PANTHER" id="PTHR19271">
    <property type="entry name" value="CYTOCHROME B"/>
    <property type="match status" value="1"/>
</dbReference>
<dbReference type="PANTHER" id="PTHR19271:SF16">
    <property type="entry name" value="CYTOCHROME B"/>
    <property type="match status" value="1"/>
</dbReference>
<dbReference type="Pfam" id="PF00032">
    <property type="entry name" value="Cytochrom_B_C"/>
    <property type="match status" value="1"/>
</dbReference>
<dbReference type="Pfam" id="PF00033">
    <property type="entry name" value="Cytochrome_B"/>
    <property type="match status" value="1"/>
</dbReference>
<dbReference type="SUPFAM" id="SSF81648">
    <property type="entry name" value="a domain/subunit of cytochrome bc1 complex (Ubiquinol-cytochrome c reductase)"/>
    <property type="match status" value="1"/>
</dbReference>
<dbReference type="SUPFAM" id="SSF81342">
    <property type="entry name" value="Transmembrane di-heme cytochromes"/>
    <property type="match status" value="1"/>
</dbReference>
<dbReference type="PROSITE" id="PS51003">
    <property type="entry name" value="CYTB_CTER"/>
    <property type="match status" value="1"/>
</dbReference>
<dbReference type="PROSITE" id="PS51002">
    <property type="entry name" value="CYTB_NTER"/>
    <property type="match status" value="1"/>
</dbReference>
<keyword id="KW-0249">Electron transport</keyword>
<keyword id="KW-0349">Heme</keyword>
<keyword id="KW-0408">Iron</keyword>
<keyword id="KW-0472">Membrane</keyword>
<keyword id="KW-0479">Metal-binding</keyword>
<keyword id="KW-0496">Mitochondrion</keyword>
<keyword id="KW-0999">Mitochondrion inner membrane</keyword>
<keyword id="KW-0679">Respiratory chain</keyword>
<keyword id="KW-0691">RNA editing</keyword>
<keyword id="KW-0812">Transmembrane</keyword>
<keyword id="KW-1133">Transmembrane helix</keyword>
<keyword id="KW-0813">Transport</keyword>
<keyword id="KW-0830">Ubiquinone</keyword>
<organism>
    <name type="scientific">Trypanoplasma borreli</name>
    <dbReference type="NCBI Taxonomy" id="5710"/>
    <lineage>
        <taxon>Eukaryota</taxon>
        <taxon>Discoba</taxon>
        <taxon>Euglenozoa</taxon>
        <taxon>Kinetoplastea</taxon>
        <taxon>Metakinetoplastina</taxon>
        <taxon>Parabodonida</taxon>
        <taxon>Trypanoplasma</taxon>
    </lineage>
</organism>
<comment type="function">
    <text evidence="3">Component of the ubiquinol-cytochrome c reductase complex (complex III or cytochrome b-c1 complex) that is part of the mitochondrial respiratory chain. The b-c1 complex mediates electron transfer from ubiquinol to cytochrome c. Contributes to the generation of a proton gradient across the mitochondrial membrane that is then used for ATP synthesis.</text>
</comment>
<comment type="cofactor">
    <cofactor evidence="3">
        <name>heme b</name>
        <dbReference type="ChEBI" id="CHEBI:60344"/>
    </cofactor>
    <text evidence="3">Binds 2 heme b groups non-covalently.</text>
</comment>
<comment type="subunit">
    <text evidence="1">The main subunits of complex b-c1 are: cytochrome b, cytochrome c1 and the Rieske protein.</text>
</comment>
<comment type="subcellular location">
    <subcellularLocation>
        <location evidence="3">Mitochondrion inner membrane</location>
        <topology evidence="3">Multi-pass membrane protein</topology>
    </subcellularLocation>
</comment>
<comment type="RNA editing" locationType="Not_applicable">
    <text evidence="7 8">Some positions are modified by RNA editing via nucleotide insertion or deletion.</text>
</comment>
<comment type="miscellaneous">
    <text evidence="1">Heme 1 (or BL or b562) is low-potential and absorbs at about 562 nm, and heme 2 (or BH or b566) is high-potential and absorbs at about 566 nm.</text>
</comment>
<comment type="similarity">
    <text evidence="5 6">Belongs to the cytochrome b family.</text>
</comment>
<comment type="caution">
    <text evidence="3">The protein contains an even number of transmembrane helices, fewer than predicted by bioinformatics tools.</text>
</comment>
<accession>Q33568</accession>
<accession>Q35988</accession>
<sequence>MFFRLRFLVFFVLFRNLCCLLLSGDLFRVYGLGFNLGVMIALQILVGICLSWFFFRCIIPQNWIFTLLIHLEFDLGFIIRSLHIIFTSLLYFLLYIHIIKVIFLCLIFDSSMLVWFFGFLIFIFILIIAFIGYTLPCTSMSYWGLTVFSNILATIPLIGIYICQWIWCSEFINDFTLLKLHSIHIFLPFVLLFLIGAHFFVLHYFLSSDGLLDRFPFYYERFFFFLLYYLRDLFLIINILCFLIYYICIYWFFVFHEESWIIVDTLKTSDKILPEWFFLSFFGFLKSVPDKFMGLFLLFVLCFALFLFILNCILIFIYCRSSLLWMSLSLVLFYYLCVGGFLSLYVVLCFPLWMEIQFWVLLLFCFIVCRLD</sequence>
<feature type="chain" id="PRO_0000061691" description="Cytochrome b">
    <location>
        <begin position="1"/>
        <end position="372"/>
    </location>
</feature>
<feature type="transmembrane region" description="Helical" evidence="3">
    <location>
        <begin position="32"/>
        <end position="52"/>
    </location>
</feature>
<feature type="transmembrane region" description="Helical" evidence="3">
    <location>
        <begin position="77"/>
        <end position="99"/>
    </location>
</feature>
<feature type="transmembrane region" description="Helical" evidence="3">
    <location>
        <begin position="114"/>
        <end position="134"/>
    </location>
</feature>
<feature type="transmembrane region" description="Helical" evidence="3">
    <location>
        <begin position="180"/>
        <end position="200"/>
    </location>
</feature>
<feature type="transmembrane region" description="Helical" evidence="3">
    <location>
        <begin position="228"/>
        <end position="248"/>
    </location>
</feature>
<feature type="transmembrane region" description="Helical" evidence="4">
    <location>
        <begin position="297"/>
        <end position="317"/>
    </location>
</feature>
<feature type="transmembrane region" description="Helical" evidence="4">
    <location>
        <begin position="330"/>
        <end position="350"/>
    </location>
</feature>
<feature type="transmembrane region" description="Helical" evidence="4">
    <location>
        <begin position="351"/>
        <end position="371"/>
    </location>
</feature>
<feature type="binding site" description="axial binding residue" evidence="3">
    <location>
        <position position="83"/>
    </location>
    <ligand>
        <name>heme b</name>
        <dbReference type="ChEBI" id="CHEBI:60344"/>
        <label>b562</label>
    </ligand>
    <ligandPart>
        <name>Fe</name>
        <dbReference type="ChEBI" id="CHEBI:18248"/>
    </ligandPart>
</feature>
<feature type="binding site" description="axial binding residue" evidence="3">
    <location>
        <position position="97"/>
    </location>
    <ligand>
        <name>heme b</name>
        <dbReference type="ChEBI" id="CHEBI:60344"/>
        <label>b566</label>
    </ligand>
    <ligandPart>
        <name>Fe</name>
        <dbReference type="ChEBI" id="CHEBI:18248"/>
    </ligandPart>
</feature>
<feature type="binding site" description="axial binding residue" evidence="3">
    <location>
        <position position="184"/>
    </location>
    <ligand>
        <name>heme b</name>
        <dbReference type="ChEBI" id="CHEBI:60344"/>
        <label>b562</label>
    </ligand>
    <ligandPart>
        <name>Fe</name>
        <dbReference type="ChEBI" id="CHEBI:18248"/>
    </ligandPart>
</feature>
<feature type="binding site" description="axial binding residue" evidence="3">
    <location>
        <position position="198"/>
    </location>
    <ligand>
        <name>heme b</name>
        <dbReference type="ChEBI" id="CHEBI:60344"/>
        <label>b566</label>
    </ligand>
    <ligandPart>
        <name>Fe</name>
        <dbReference type="ChEBI" id="CHEBI:18248"/>
    </ligandPart>
</feature>
<feature type="binding site" evidence="2">
    <location>
        <position position="203"/>
    </location>
    <ligand>
        <name>a ubiquinone</name>
        <dbReference type="ChEBI" id="CHEBI:16389"/>
    </ligand>
</feature>
<proteinExistence type="evidence at transcript level"/>
<geneLocation type="mitochondrion"/>
<protein>
    <recommendedName>
        <fullName>Cytochrome b</fullName>
    </recommendedName>
    <alternativeName>
        <fullName>Complex III subunit 3</fullName>
    </alternativeName>
    <alternativeName>
        <fullName>Complex III subunit III</fullName>
    </alternativeName>
    <alternativeName>
        <fullName>Cytochrome b-c1 complex subunit 3</fullName>
    </alternativeName>
    <alternativeName>
        <fullName>Ubiquinol-cytochrome-c reductase complex cytochrome b subunit</fullName>
    </alternativeName>
</protein>
<gene>
    <name type="primary">MT-CYB</name>
    <name type="synonym">COB</name>
    <name type="synonym">CYTB</name>
    <name type="synonym">MTCYB</name>
</gene>
<reference key="1">
    <citation type="journal article" date="1994" name="Mol. Cell. Biol.">
        <title>RNA editing and mitochondrial genomic organization in the cryptobiid kinetoplastid protozoan Trypanoplasma borreli.</title>
        <authorList>
            <person name="Maslov D.A."/>
            <person name="Simpson L."/>
        </authorList>
    </citation>
    <scope>NUCLEOTIDE SEQUENCE [MRNA]</scope>
    <scope>RNA EDITING</scope>
    <source>
        <strain>PG-JH</strain>
    </source>
</reference>
<reference key="2">
    <citation type="journal article" date="1994" name="EMBO J.">
        <title>Novel pattern of editing regions in mitochondrial transcripts of the cryptobiid Trypanoplasma borreli.</title>
        <authorList>
            <person name="Lukes J."/>
            <person name="Arts G.J."/>
            <person name="van den Burg J."/>
            <person name="de Haan A."/>
            <person name="Opperdoes F."/>
            <person name="Sloof P."/>
            <person name="Benne R."/>
        </authorList>
    </citation>
    <scope>NUCLEOTIDE SEQUENCE [MRNA]</scope>
    <scope>RNA EDITING</scope>
    <source>
        <strain>TT-JH</strain>
    </source>
</reference>